<comment type="function">
    <text evidence="2 3">Class-III neuronal intermediate filament protein (By similarity). May form an independent structural network without the involvement of other neurofilaments or may cooperate with the neuronal intermediate filament proteins NEFL, NEFH, NEFM and INA to form a filamentous network (By similarity). Assembly of the neuronal intermediate filaments may be regulated by RAB7A (By similarity). Plays a role in the development of unmyelinated sensory neurons (By similarity). May be involved in axon elongation and axon regeneration after injury (By similarity). Inhibits neurite extension in type II spiral ganglion neurons in the cochlea (By similarity).</text>
</comment>
<comment type="subunit">
    <text evidence="2 3 4">Forms homodimers (in vitro) (By similarity). Homopolymerizes into a filamentous network (in vitro) (By similarity). Forms heterodimers with NEFL, NEFM or NEFH (in vitro) (By similarity). Interacts with DST (via C-terminus) (By similarity). Interacts with RAB7A; the interaction is direct (By similarity). Interacts with PRKCE (via phorbol-ester/DAG-type 2 domain) (By similarity).</text>
</comment>
<comment type="subcellular location">
    <subcellularLocation>
        <location evidence="2">Cytoplasm</location>
        <location evidence="2">Cytoskeleton</location>
    </subcellularLocation>
    <subcellularLocation>
        <location evidence="2">Cell projection</location>
        <location evidence="2">Axon</location>
    </subcellularLocation>
    <subcellularLocation>
        <location evidence="2">Perikaryon</location>
    </subcellularLocation>
</comment>
<comment type="PTM">
    <text evidence="3">Phosphorylated; phosphorylation increases after nerve injury in regenerating neurons.</text>
</comment>
<comment type="similarity">
    <text evidence="5">Belongs to the intermediate filament family.</text>
</comment>
<protein>
    <recommendedName>
        <fullName>Peripherin</fullName>
    </recommendedName>
</protein>
<accession>A6QQJ3</accession>
<reference key="1">
    <citation type="submission" date="2007-07" db="EMBL/GenBank/DDBJ databases">
        <authorList>
            <consortium name="NIH - Mammalian Gene Collection (MGC) project"/>
        </authorList>
    </citation>
    <scope>NUCLEOTIDE SEQUENCE [LARGE SCALE MRNA]</scope>
    <source>
        <strain>Hereford</strain>
        <tissue>Ascending colon</tissue>
    </source>
</reference>
<dbReference type="EMBL" id="BC149862">
    <property type="protein sequence ID" value="AAI49863.1"/>
    <property type="molecule type" value="mRNA"/>
</dbReference>
<dbReference type="RefSeq" id="NP_001095848.1">
    <property type="nucleotide sequence ID" value="NM_001102378.1"/>
</dbReference>
<dbReference type="SMR" id="A6QQJ3"/>
<dbReference type="FunCoup" id="A6QQJ3">
    <property type="interactions" value="121"/>
</dbReference>
<dbReference type="STRING" id="9913.ENSBTAP00000023744"/>
<dbReference type="PaxDb" id="9913-ENSBTAP00000023744"/>
<dbReference type="PeptideAtlas" id="A6QQJ3"/>
<dbReference type="GeneID" id="510082"/>
<dbReference type="KEGG" id="bta:510082"/>
<dbReference type="CTD" id="5630"/>
<dbReference type="VEuPathDB" id="HostDB:ENSBTAG00000017864"/>
<dbReference type="eggNOG" id="ENOG502QPSH">
    <property type="taxonomic scope" value="Eukaryota"/>
</dbReference>
<dbReference type="HOGENOM" id="CLU_012560_7_4_1"/>
<dbReference type="InParanoid" id="A6QQJ3"/>
<dbReference type="OMA" id="MSHHPAG"/>
<dbReference type="OrthoDB" id="2441647at2759"/>
<dbReference type="TreeFam" id="TF330122"/>
<dbReference type="Proteomes" id="UP000009136">
    <property type="component" value="Chromosome 5"/>
</dbReference>
<dbReference type="Bgee" id="ENSBTAG00000017864">
    <property type="expression patterns" value="Expressed in conceptus and 51 other cell types or tissues"/>
</dbReference>
<dbReference type="GO" id="GO:0030424">
    <property type="term" value="C:axon"/>
    <property type="evidence" value="ECO:0000318"/>
    <property type="project" value="GO_Central"/>
</dbReference>
<dbReference type="GO" id="GO:0005737">
    <property type="term" value="C:cytoplasm"/>
    <property type="evidence" value="ECO:0007669"/>
    <property type="project" value="UniProtKB-KW"/>
</dbReference>
<dbReference type="GO" id="GO:0043204">
    <property type="term" value="C:perikaryon"/>
    <property type="evidence" value="ECO:0007669"/>
    <property type="project" value="UniProtKB-SubCell"/>
</dbReference>
<dbReference type="GO" id="GO:0005886">
    <property type="term" value="C:plasma membrane"/>
    <property type="evidence" value="ECO:0000318"/>
    <property type="project" value="GO_Central"/>
</dbReference>
<dbReference type="GO" id="GO:0045098">
    <property type="term" value="C:type III intermediate filament"/>
    <property type="evidence" value="ECO:0000318"/>
    <property type="project" value="GO_Central"/>
</dbReference>
<dbReference type="GO" id="GO:0005200">
    <property type="term" value="F:structural constituent of cytoskeleton"/>
    <property type="evidence" value="ECO:0000318"/>
    <property type="project" value="GO_Central"/>
</dbReference>
<dbReference type="GO" id="GO:0045109">
    <property type="term" value="P:intermediate filament organization"/>
    <property type="evidence" value="ECO:0000318"/>
    <property type="project" value="GO_Central"/>
</dbReference>
<dbReference type="FunFam" id="1.20.5.1160:FF:000001">
    <property type="entry name" value="Keratin type II"/>
    <property type="match status" value="1"/>
</dbReference>
<dbReference type="FunFam" id="1.20.5.170:FF:000002">
    <property type="entry name" value="Type I keratin KA11"/>
    <property type="match status" value="1"/>
</dbReference>
<dbReference type="FunFam" id="1.20.5.500:FF:000001">
    <property type="entry name" value="Type II keratin 23"/>
    <property type="match status" value="1"/>
</dbReference>
<dbReference type="Gene3D" id="1.20.5.170">
    <property type="match status" value="1"/>
</dbReference>
<dbReference type="Gene3D" id="1.20.5.500">
    <property type="entry name" value="Single helix bin"/>
    <property type="match status" value="1"/>
</dbReference>
<dbReference type="Gene3D" id="1.20.5.1160">
    <property type="entry name" value="Vasodilator-stimulated phosphoprotein"/>
    <property type="match status" value="1"/>
</dbReference>
<dbReference type="InterPro" id="IPR018039">
    <property type="entry name" value="IF_conserved"/>
</dbReference>
<dbReference type="InterPro" id="IPR039008">
    <property type="entry name" value="IF_rod_dom"/>
</dbReference>
<dbReference type="InterPro" id="IPR006821">
    <property type="entry name" value="Intermed_filament_DNA-bd"/>
</dbReference>
<dbReference type="InterPro" id="IPR050405">
    <property type="entry name" value="Intermediate_filament"/>
</dbReference>
<dbReference type="InterPro" id="IPR002957">
    <property type="entry name" value="Keratin_I"/>
</dbReference>
<dbReference type="PANTHER" id="PTHR45652">
    <property type="entry name" value="GLIAL FIBRILLARY ACIDIC PROTEIN"/>
    <property type="match status" value="1"/>
</dbReference>
<dbReference type="PANTHER" id="PTHR45652:SF14">
    <property type="entry name" value="PERIPHERIN"/>
    <property type="match status" value="1"/>
</dbReference>
<dbReference type="Pfam" id="PF00038">
    <property type="entry name" value="Filament"/>
    <property type="match status" value="1"/>
</dbReference>
<dbReference type="Pfam" id="PF04732">
    <property type="entry name" value="Filament_head"/>
    <property type="match status" value="1"/>
</dbReference>
<dbReference type="PRINTS" id="PR01248">
    <property type="entry name" value="TYPE1KERATIN"/>
</dbReference>
<dbReference type="SMART" id="SM01391">
    <property type="entry name" value="Filament"/>
    <property type="match status" value="1"/>
</dbReference>
<dbReference type="SUPFAM" id="SSF64593">
    <property type="entry name" value="Intermediate filament protein, coiled coil region"/>
    <property type="match status" value="2"/>
</dbReference>
<dbReference type="PROSITE" id="PS00226">
    <property type="entry name" value="IF_ROD_1"/>
    <property type="match status" value="1"/>
</dbReference>
<dbReference type="PROSITE" id="PS51842">
    <property type="entry name" value="IF_ROD_2"/>
    <property type="match status" value="1"/>
</dbReference>
<evidence type="ECO:0000250" key="1"/>
<evidence type="ECO:0000250" key="2">
    <source>
        <dbReference type="UniProtKB" id="P15331"/>
    </source>
</evidence>
<evidence type="ECO:0000250" key="3">
    <source>
        <dbReference type="UniProtKB" id="P21807"/>
    </source>
</evidence>
<evidence type="ECO:0000250" key="4">
    <source>
        <dbReference type="UniProtKB" id="P41219"/>
    </source>
</evidence>
<evidence type="ECO:0000255" key="5">
    <source>
        <dbReference type="PROSITE-ProRule" id="PRU01188"/>
    </source>
</evidence>
<evidence type="ECO:0000256" key="6">
    <source>
        <dbReference type="SAM" id="MobiDB-lite"/>
    </source>
</evidence>
<gene>
    <name type="primary">PRPH</name>
</gene>
<organism>
    <name type="scientific">Bos taurus</name>
    <name type="common">Bovine</name>
    <dbReference type="NCBI Taxonomy" id="9913"/>
    <lineage>
        <taxon>Eukaryota</taxon>
        <taxon>Metazoa</taxon>
        <taxon>Chordata</taxon>
        <taxon>Craniata</taxon>
        <taxon>Vertebrata</taxon>
        <taxon>Euteleostomi</taxon>
        <taxon>Mammalia</taxon>
        <taxon>Eutheria</taxon>
        <taxon>Laurasiatheria</taxon>
        <taxon>Artiodactyla</taxon>
        <taxon>Ruminantia</taxon>
        <taxon>Pecora</taxon>
        <taxon>Bovidae</taxon>
        <taxon>Bovinae</taxon>
        <taxon>Bos</taxon>
    </lineage>
</organism>
<name>PERI_BOVIN</name>
<feature type="chain" id="PRO_0000405805" description="Peripherin">
    <location>
        <begin position="1"/>
        <end position="469"/>
    </location>
</feature>
<feature type="domain" description="IF rod" evidence="5">
    <location>
        <begin position="96"/>
        <end position="406"/>
    </location>
</feature>
<feature type="region of interest" description="Head">
    <location>
        <begin position="1"/>
        <end position="98"/>
    </location>
</feature>
<feature type="region of interest" description="Disordered" evidence="6">
    <location>
        <begin position="1"/>
        <end position="60"/>
    </location>
</feature>
<feature type="region of interest" description="Coil 1A">
    <location>
        <begin position="99"/>
        <end position="131"/>
    </location>
</feature>
<feature type="region of interest" description="Linker 1">
    <location>
        <begin position="132"/>
        <end position="142"/>
    </location>
</feature>
<feature type="region of interest" description="Coil 1B">
    <location>
        <begin position="143"/>
        <end position="238"/>
    </location>
</feature>
<feature type="region of interest" description="Linker 2">
    <location>
        <begin position="239"/>
        <end position="261"/>
    </location>
</feature>
<feature type="region of interest" description="Coil 2">
    <location>
        <begin position="262"/>
        <end position="404"/>
    </location>
</feature>
<feature type="region of interest" description="Tail" evidence="1">
    <location>
        <begin position="405"/>
        <end position="469"/>
    </location>
</feature>
<feature type="region of interest" description="Disordered" evidence="6">
    <location>
        <begin position="447"/>
        <end position="469"/>
    </location>
</feature>
<feature type="compositionally biased region" description="Low complexity" evidence="6">
    <location>
        <begin position="1"/>
        <end position="18"/>
    </location>
</feature>
<feature type="compositionally biased region" description="Low complexity" evidence="6">
    <location>
        <begin position="27"/>
        <end position="53"/>
    </location>
</feature>
<feature type="modified residue" description="3'-nitrotyrosine" evidence="3">
    <location>
        <position position="16"/>
    </location>
</feature>
<feature type="modified residue" description="Phosphoserine" evidence="3">
    <location>
        <position position="27"/>
    </location>
</feature>
<feature type="modified residue" description="Phosphoserine" evidence="3">
    <location>
        <position position="49"/>
    </location>
</feature>
<feature type="modified residue" description="Phosphoserine" evidence="2">
    <location>
        <position position="58"/>
    </location>
</feature>
<feature type="modified residue" description="3'-nitrotyrosine" evidence="3">
    <location>
        <position position="378"/>
    </location>
</feature>
<feature type="modified residue" description="Phosphotyrosine" evidence="3">
    <location>
        <position position="469"/>
    </location>
</feature>
<sequence>MSHPSGLRSSVSSTSYRRTFGPPPSLSPGAFSYSSSSRFSSSRLLGSASPGSSVRLGSFRGPRAGTGALLRLPSERLDFSMAEALNQEFLATRSNEKQELQELNDRFANFIEKVRFLEQQNAALRGELNQARGQEPARADQLCQQELRELRRELELLGRERDRVQVERDGLAEDLAALKQRLEEETRKREDAEHNLVLFRKDVDDATLSRLELERKIESLMDEIEFLKKLHEEELRDLQLSVESQQVQHVEVEATVKPELTAALRDIRAQYESIAAKNLQEAEEWYKSKYADLSDAANRNHEALRQAKQEMNESRRQIQSLTCEVDGLRGTNEALLRQLRELEEQFALEAGGYQAGAARLEEELRQLKEEMARHLREYQELLNVKMALDIEIATYRKLLEGEESRISVPVHSFASLSIKTTVPEVEPPQETHSRKMVLIRTIETRDGEQVVTESQKEQHSELDKSPQSY</sequence>
<proteinExistence type="evidence at transcript level"/>
<keyword id="KW-0966">Cell projection</keyword>
<keyword id="KW-0175">Coiled coil</keyword>
<keyword id="KW-0963">Cytoplasm</keyword>
<keyword id="KW-0206">Cytoskeleton</keyword>
<keyword id="KW-0403">Intermediate filament</keyword>
<keyword id="KW-0944">Nitration</keyword>
<keyword id="KW-0597">Phosphoprotein</keyword>
<keyword id="KW-1185">Reference proteome</keyword>